<gene>
    <name evidence="1" type="primary">rplS</name>
    <name type="ordered locus">DMR_34660</name>
</gene>
<protein>
    <recommendedName>
        <fullName evidence="1">Large ribosomal subunit protein bL19</fullName>
    </recommendedName>
    <alternativeName>
        <fullName evidence="2">50S ribosomal protein L19</fullName>
    </alternativeName>
</protein>
<evidence type="ECO:0000255" key="1">
    <source>
        <dbReference type="HAMAP-Rule" id="MF_00402"/>
    </source>
</evidence>
<evidence type="ECO:0000305" key="2"/>
<name>RL19_SOLM1</name>
<keyword id="KW-0687">Ribonucleoprotein</keyword>
<keyword id="KW-0689">Ribosomal protein</keyword>
<sequence>MNVIDQLEREQMRMDIPAFRPGDTIKVHLRIIEGEKERIQVFQGAVLRLRKGGVDSTFTVRKVSDGVGVERVFPMHSPFIERIEVVAQGKVRRSRLYYLRALRGKAARIKTRTAWD</sequence>
<organism>
    <name type="scientific">Solidesulfovibrio magneticus (strain ATCC 700980 / DSM 13731 / RS-1)</name>
    <name type="common">Desulfovibrio magneticus</name>
    <dbReference type="NCBI Taxonomy" id="573370"/>
    <lineage>
        <taxon>Bacteria</taxon>
        <taxon>Pseudomonadati</taxon>
        <taxon>Thermodesulfobacteriota</taxon>
        <taxon>Desulfovibrionia</taxon>
        <taxon>Desulfovibrionales</taxon>
        <taxon>Desulfovibrionaceae</taxon>
        <taxon>Solidesulfovibrio</taxon>
    </lineage>
</organism>
<reference key="1">
    <citation type="journal article" date="2009" name="Genome Res.">
        <title>Whole genome sequence of Desulfovibrio magneticus strain RS-1 revealed common gene clusters in magnetotactic bacteria.</title>
        <authorList>
            <person name="Nakazawa H."/>
            <person name="Arakaki A."/>
            <person name="Narita-Yamada S."/>
            <person name="Yashiro I."/>
            <person name="Jinno K."/>
            <person name="Aoki N."/>
            <person name="Tsuruyama A."/>
            <person name="Okamura Y."/>
            <person name="Tanikawa S."/>
            <person name="Fujita N."/>
            <person name="Takeyama H."/>
            <person name="Matsunaga T."/>
        </authorList>
    </citation>
    <scope>NUCLEOTIDE SEQUENCE [LARGE SCALE GENOMIC DNA]</scope>
    <source>
        <strain>ATCC 700980 / DSM 13731 / RS-1</strain>
    </source>
</reference>
<feature type="chain" id="PRO_1000205886" description="Large ribosomal subunit protein bL19">
    <location>
        <begin position="1"/>
        <end position="116"/>
    </location>
</feature>
<dbReference type="EMBL" id="AP010904">
    <property type="protein sequence ID" value="BAH76957.1"/>
    <property type="molecule type" value="Genomic_DNA"/>
</dbReference>
<dbReference type="RefSeq" id="WP_015862105.1">
    <property type="nucleotide sequence ID" value="NC_012796.1"/>
</dbReference>
<dbReference type="SMR" id="C4XKL7"/>
<dbReference type="STRING" id="573370.DMR_34660"/>
<dbReference type="KEGG" id="dma:DMR_34660"/>
<dbReference type="eggNOG" id="COG0335">
    <property type="taxonomic scope" value="Bacteria"/>
</dbReference>
<dbReference type="HOGENOM" id="CLU_103507_2_1_7"/>
<dbReference type="OrthoDB" id="9803541at2"/>
<dbReference type="Proteomes" id="UP000009071">
    <property type="component" value="Chromosome"/>
</dbReference>
<dbReference type="GO" id="GO:0022625">
    <property type="term" value="C:cytosolic large ribosomal subunit"/>
    <property type="evidence" value="ECO:0007669"/>
    <property type="project" value="TreeGrafter"/>
</dbReference>
<dbReference type="GO" id="GO:0003735">
    <property type="term" value="F:structural constituent of ribosome"/>
    <property type="evidence" value="ECO:0007669"/>
    <property type="project" value="InterPro"/>
</dbReference>
<dbReference type="GO" id="GO:0006412">
    <property type="term" value="P:translation"/>
    <property type="evidence" value="ECO:0007669"/>
    <property type="project" value="UniProtKB-UniRule"/>
</dbReference>
<dbReference type="FunFam" id="2.30.30.790:FF:000001">
    <property type="entry name" value="50S ribosomal protein L19"/>
    <property type="match status" value="1"/>
</dbReference>
<dbReference type="Gene3D" id="2.30.30.790">
    <property type="match status" value="1"/>
</dbReference>
<dbReference type="HAMAP" id="MF_00402">
    <property type="entry name" value="Ribosomal_bL19"/>
    <property type="match status" value="1"/>
</dbReference>
<dbReference type="InterPro" id="IPR001857">
    <property type="entry name" value="Ribosomal_bL19"/>
</dbReference>
<dbReference type="InterPro" id="IPR038657">
    <property type="entry name" value="Ribosomal_bL19_sf"/>
</dbReference>
<dbReference type="InterPro" id="IPR008991">
    <property type="entry name" value="Translation_prot_SH3-like_sf"/>
</dbReference>
<dbReference type="NCBIfam" id="TIGR01024">
    <property type="entry name" value="rplS_bact"/>
    <property type="match status" value="1"/>
</dbReference>
<dbReference type="PANTHER" id="PTHR15680:SF9">
    <property type="entry name" value="LARGE RIBOSOMAL SUBUNIT PROTEIN BL19M"/>
    <property type="match status" value="1"/>
</dbReference>
<dbReference type="PANTHER" id="PTHR15680">
    <property type="entry name" value="RIBOSOMAL PROTEIN L19"/>
    <property type="match status" value="1"/>
</dbReference>
<dbReference type="Pfam" id="PF01245">
    <property type="entry name" value="Ribosomal_L19"/>
    <property type="match status" value="1"/>
</dbReference>
<dbReference type="PIRSF" id="PIRSF002191">
    <property type="entry name" value="Ribosomal_L19"/>
    <property type="match status" value="1"/>
</dbReference>
<dbReference type="PRINTS" id="PR00061">
    <property type="entry name" value="RIBOSOMALL19"/>
</dbReference>
<dbReference type="SUPFAM" id="SSF50104">
    <property type="entry name" value="Translation proteins SH3-like domain"/>
    <property type="match status" value="1"/>
</dbReference>
<proteinExistence type="inferred from homology"/>
<comment type="function">
    <text evidence="1">This protein is located at the 30S-50S ribosomal subunit interface and may play a role in the structure and function of the aminoacyl-tRNA binding site.</text>
</comment>
<comment type="similarity">
    <text evidence="1">Belongs to the bacterial ribosomal protein bL19 family.</text>
</comment>
<accession>C4XKL7</accession>